<dbReference type="EMBL" id="CP000886">
    <property type="protein sequence ID" value="ABX67819.1"/>
    <property type="molecule type" value="Genomic_DNA"/>
</dbReference>
<dbReference type="RefSeq" id="WP_000420603.1">
    <property type="nucleotide sequence ID" value="NC_010102.1"/>
</dbReference>
<dbReference type="SMR" id="A9N6S2"/>
<dbReference type="KEGG" id="spq:SPAB_02438"/>
<dbReference type="PATRIC" id="fig|1016998.12.peg.2306"/>
<dbReference type="HOGENOM" id="CLU_017633_0_0_6"/>
<dbReference type="BioCyc" id="SENT1016998:SPAB_RS09900-MONOMER"/>
<dbReference type="Proteomes" id="UP000008556">
    <property type="component" value="Chromosome"/>
</dbReference>
<dbReference type="GO" id="GO:0005737">
    <property type="term" value="C:cytoplasm"/>
    <property type="evidence" value="ECO:0007669"/>
    <property type="project" value="UniProtKB-UniRule"/>
</dbReference>
<dbReference type="GO" id="GO:0009295">
    <property type="term" value="C:nucleoid"/>
    <property type="evidence" value="ECO:0007669"/>
    <property type="project" value="UniProtKB-SubCell"/>
</dbReference>
<dbReference type="GO" id="GO:0003681">
    <property type="term" value="F:bent DNA binding"/>
    <property type="evidence" value="ECO:0007669"/>
    <property type="project" value="UniProtKB-UniRule"/>
</dbReference>
<dbReference type="GO" id="GO:0051082">
    <property type="term" value="F:unfolded protein binding"/>
    <property type="evidence" value="ECO:0007669"/>
    <property type="project" value="InterPro"/>
</dbReference>
<dbReference type="GO" id="GO:0051085">
    <property type="term" value="P:chaperone cofactor-dependent protein refolding"/>
    <property type="evidence" value="ECO:0007669"/>
    <property type="project" value="TreeGrafter"/>
</dbReference>
<dbReference type="GO" id="GO:0042026">
    <property type="term" value="P:protein refolding"/>
    <property type="evidence" value="ECO:0007669"/>
    <property type="project" value="TreeGrafter"/>
</dbReference>
<dbReference type="CDD" id="cd06257">
    <property type="entry name" value="DnaJ"/>
    <property type="match status" value="1"/>
</dbReference>
<dbReference type="CDD" id="cd10747">
    <property type="entry name" value="DnaJ_C"/>
    <property type="match status" value="1"/>
</dbReference>
<dbReference type="FunFam" id="1.10.287.110:FF:000013">
    <property type="entry name" value="Curved DNA-binding protein"/>
    <property type="match status" value="1"/>
</dbReference>
<dbReference type="FunFam" id="2.60.260.20:FF:000008">
    <property type="entry name" value="Curved DNA-binding protein"/>
    <property type="match status" value="1"/>
</dbReference>
<dbReference type="Gene3D" id="1.10.287.110">
    <property type="entry name" value="DnaJ domain"/>
    <property type="match status" value="1"/>
</dbReference>
<dbReference type="Gene3D" id="1.20.5.460">
    <property type="entry name" value="Single helix bin"/>
    <property type="match status" value="1"/>
</dbReference>
<dbReference type="Gene3D" id="2.60.260.20">
    <property type="entry name" value="Urease metallochaperone UreE, N-terminal domain"/>
    <property type="match status" value="2"/>
</dbReference>
<dbReference type="HAMAP" id="MF_01154">
    <property type="entry name" value="CbpA"/>
    <property type="match status" value="1"/>
</dbReference>
<dbReference type="InterPro" id="IPR023859">
    <property type="entry name" value="DNA-bd_curved-DNA"/>
</dbReference>
<dbReference type="InterPro" id="IPR002939">
    <property type="entry name" value="DnaJ_C"/>
</dbReference>
<dbReference type="InterPro" id="IPR001623">
    <property type="entry name" value="DnaJ_domain"/>
</dbReference>
<dbReference type="InterPro" id="IPR018253">
    <property type="entry name" value="DnaJ_domain_CS"/>
</dbReference>
<dbReference type="InterPro" id="IPR008971">
    <property type="entry name" value="HSP40/DnaJ_pept-bd"/>
</dbReference>
<dbReference type="InterPro" id="IPR036869">
    <property type="entry name" value="J_dom_sf"/>
</dbReference>
<dbReference type="NCBIfam" id="NF007618">
    <property type="entry name" value="PRK10266.1"/>
    <property type="match status" value="1"/>
</dbReference>
<dbReference type="PANTHER" id="PTHR43096">
    <property type="entry name" value="DNAJ HOMOLOG 1, MITOCHONDRIAL-RELATED"/>
    <property type="match status" value="1"/>
</dbReference>
<dbReference type="PANTHER" id="PTHR43096:SF52">
    <property type="entry name" value="DNAJ HOMOLOG 1, MITOCHONDRIAL-RELATED"/>
    <property type="match status" value="1"/>
</dbReference>
<dbReference type="Pfam" id="PF00226">
    <property type="entry name" value="DnaJ"/>
    <property type="match status" value="1"/>
</dbReference>
<dbReference type="Pfam" id="PF01556">
    <property type="entry name" value="DnaJ_C"/>
    <property type="match status" value="1"/>
</dbReference>
<dbReference type="PRINTS" id="PR00625">
    <property type="entry name" value="JDOMAIN"/>
</dbReference>
<dbReference type="SMART" id="SM00271">
    <property type="entry name" value="DnaJ"/>
    <property type="match status" value="1"/>
</dbReference>
<dbReference type="SUPFAM" id="SSF46565">
    <property type="entry name" value="Chaperone J-domain"/>
    <property type="match status" value="1"/>
</dbReference>
<dbReference type="SUPFAM" id="SSF49493">
    <property type="entry name" value="HSP40/DnaJ peptide-binding domain"/>
    <property type="match status" value="2"/>
</dbReference>
<dbReference type="PROSITE" id="PS00636">
    <property type="entry name" value="DNAJ_1"/>
    <property type="match status" value="1"/>
</dbReference>
<dbReference type="PROSITE" id="PS50076">
    <property type="entry name" value="DNAJ_2"/>
    <property type="match status" value="1"/>
</dbReference>
<sequence length="306" mass="34693">MELKDYYAIMGVKPTDDLKTIKTAYRRLARKYHPDVSKEPDAEARFKEVAEAWEVLSDEQRRAEYDQLWQHRNDPQFNRQFQQHEGQPYNAEDFDDIFSSIFGQHGRHSHHRHAARGHDIEIEVAVFLEETLEEHQRTISYSVPVYNAFGLVEREIPKTLNVKIPAGVSNGQRIRLKGQGTPGENGGPNGDLWLVIHIAPHPLFDIVNQDLEVVLPLAPWEAALGAKVSVPTLKERILLTIPPGSQAGQRLRIKGKGLASKKHTGDLYAIIKIVMPPKPDEKTAALWQQLADAQSSFDPRQQWGKA</sequence>
<accession>A9N6S2</accession>
<feature type="chain" id="PRO_1000085342" description="Curved DNA-binding protein">
    <location>
        <begin position="1"/>
        <end position="306"/>
    </location>
</feature>
<feature type="domain" description="J" evidence="1">
    <location>
        <begin position="5"/>
        <end position="69"/>
    </location>
</feature>
<proteinExistence type="inferred from homology"/>
<protein>
    <recommendedName>
        <fullName evidence="1">Curved DNA-binding protein</fullName>
    </recommendedName>
</protein>
<keyword id="KW-0143">Chaperone</keyword>
<keyword id="KW-0963">Cytoplasm</keyword>
<keyword id="KW-0238">DNA-binding</keyword>
<name>CBPA_SALPB</name>
<organism>
    <name type="scientific">Salmonella paratyphi B (strain ATCC BAA-1250 / SPB7)</name>
    <dbReference type="NCBI Taxonomy" id="1016998"/>
    <lineage>
        <taxon>Bacteria</taxon>
        <taxon>Pseudomonadati</taxon>
        <taxon>Pseudomonadota</taxon>
        <taxon>Gammaproteobacteria</taxon>
        <taxon>Enterobacterales</taxon>
        <taxon>Enterobacteriaceae</taxon>
        <taxon>Salmonella</taxon>
    </lineage>
</organism>
<gene>
    <name evidence="1" type="primary">cbpA</name>
    <name type="ordered locus">SPAB_02438</name>
</gene>
<reference key="1">
    <citation type="submission" date="2007-11" db="EMBL/GenBank/DDBJ databases">
        <authorList>
            <consortium name="The Salmonella enterica serovar Paratyphi B Genome Sequencing Project"/>
            <person name="McClelland M."/>
            <person name="Sanderson E.K."/>
            <person name="Porwollik S."/>
            <person name="Spieth J."/>
            <person name="Clifton W.S."/>
            <person name="Fulton R."/>
            <person name="Cordes M."/>
            <person name="Wollam A."/>
            <person name="Shah N."/>
            <person name="Pepin K."/>
            <person name="Bhonagiri V."/>
            <person name="Nash W."/>
            <person name="Johnson M."/>
            <person name="Thiruvilangam P."/>
            <person name="Wilson R."/>
        </authorList>
    </citation>
    <scope>NUCLEOTIDE SEQUENCE [LARGE SCALE GENOMIC DNA]</scope>
    <source>
        <strain>ATCC BAA-1250 / SPB7</strain>
    </source>
</reference>
<evidence type="ECO:0000255" key="1">
    <source>
        <dbReference type="HAMAP-Rule" id="MF_01154"/>
    </source>
</evidence>
<comment type="function">
    <text evidence="1">DNA-binding protein that preferentially recognizes a curved DNA sequence. It is probably a functional analog of DnaJ; displays overlapping activities with DnaJ, but functions under different conditions, probably acting as a molecular chaperone in an adaptive response to environmental stresses other than heat shock. Lacks autonomous chaperone activity; binds native substrates and targets them for recognition by DnaK. Its activity is inhibited by the binding of CbpM.</text>
</comment>
<comment type="subcellular location">
    <subcellularLocation>
        <location evidence="1">Cytoplasm</location>
        <location evidence="1">Nucleoid</location>
    </subcellularLocation>
</comment>